<reference key="1">
    <citation type="journal article" date="1995" name="Yeast">
        <title>A 29.425 kb segment on the left arm of yeast chromosome XV contains more than twice as many unknown as known open reading frames.</title>
        <authorList>
            <person name="Zumstein E."/>
            <person name="Pearson B.M."/>
            <person name="Kalogeropoulos A."/>
            <person name="Schweizer M."/>
        </authorList>
    </citation>
    <scope>NUCLEOTIDE SEQUENCE [GENOMIC DNA]</scope>
    <source>
        <strain>ATCC 96604 / S288c / FY1679</strain>
    </source>
</reference>
<reference key="2">
    <citation type="journal article" date="1997" name="Nature">
        <title>The nucleotide sequence of Saccharomyces cerevisiae chromosome XV.</title>
        <authorList>
            <person name="Dujon B."/>
            <person name="Albermann K."/>
            <person name="Aldea M."/>
            <person name="Alexandraki D."/>
            <person name="Ansorge W."/>
            <person name="Arino J."/>
            <person name="Benes V."/>
            <person name="Bohn C."/>
            <person name="Bolotin-Fukuhara M."/>
            <person name="Bordonne R."/>
            <person name="Boyer J."/>
            <person name="Camasses A."/>
            <person name="Casamayor A."/>
            <person name="Casas C."/>
            <person name="Cheret G."/>
            <person name="Cziepluch C."/>
            <person name="Daignan-Fornier B."/>
            <person name="Dang V.-D."/>
            <person name="de Haan M."/>
            <person name="Delius H."/>
            <person name="Durand P."/>
            <person name="Fairhead C."/>
            <person name="Feldmann H."/>
            <person name="Gaillon L."/>
            <person name="Galisson F."/>
            <person name="Gamo F.-J."/>
            <person name="Gancedo C."/>
            <person name="Goffeau A."/>
            <person name="Goulding S.E."/>
            <person name="Grivell L.A."/>
            <person name="Habbig B."/>
            <person name="Hand N.J."/>
            <person name="Hani J."/>
            <person name="Hattenhorst U."/>
            <person name="Hebling U."/>
            <person name="Hernando Y."/>
            <person name="Herrero E."/>
            <person name="Heumann K."/>
            <person name="Hiesel R."/>
            <person name="Hilger F."/>
            <person name="Hofmann B."/>
            <person name="Hollenberg C.P."/>
            <person name="Hughes B."/>
            <person name="Jauniaux J.-C."/>
            <person name="Kalogeropoulos A."/>
            <person name="Katsoulou C."/>
            <person name="Kordes E."/>
            <person name="Lafuente M.J."/>
            <person name="Landt O."/>
            <person name="Louis E.J."/>
            <person name="Maarse A.C."/>
            <person name="Madania A."/>
            <person name="Mannhaupt G."/>
            <person name="Marck C."/>
            <person name="Martin R.P."/>
            <person name="Mewes H.-W."/>
            <person name="Michaux G."/>
            <person name="Paces V."/>
            <person name="Parle-McDermott A.G."/>
            <person name="Pearson B.M."/>
            <person name="Perrin A."/>
            <person name="Pettersson B."/>
            <person name="Poch O."/>
            <person name="Pohl T.M."/>
            <person name="Poirey R."/>
            <person name="Portetelle D."/>
            <person name="Pujol A."/>
            <person name="Purnelle B."/>
            <person name="Ramezani Rad M."/>
            <person name="Rechmann S."/>
            <person name="Schwager C."/>
            <person name="Schweizer M."/>
            <person name="Sor F."/>
            <person name="Sterky F."/>
            <person name="Tarassov I.A."/>
            <person name="Teodoru C."/>
            <person name="Tettelin H."/>
            <person name="Thierry A."/>
            <person name="Tobiasch E."/>
            <person name="Tzermia M."/>
            <person name="Uhlen M."/>
            <person name="Unseld M."/>
            <person name="Valens M."/>
            <person name="Vandenbol M."/>
            <person name="Vetter I."/>
            <person name="Vlcek C."/>
            <person name="Voet M."/>
            <person name="Volckaert G."/>
            <person name="Voss H."/>
            <person name="Wambutt R."/>
            <person name="Wedler H."/>
            <person name="Wiemann S."/>
            <person name="Winsor B."/>
            <person name="Wolfe K.H."/>
            <person name="Zollner A."/>
            <person name="Zumstein E."/>
            <person name="Kleine K."/>
        </authorList>
    </citation>
    <scope>NUCLEOTIDE SEQUENCE [LARGE SCALE GENOMIC DNA]</scope>
    <source>
        <strain>ATCC 204508 / S288c</strain>
    </source>
</reference>
<reference key="3">
    <citation type="journal article" date="2014" name="G3 (Bethesda)">
        <title>The reference genome sequence of Saccharomyces cerevisiae: Then and now.</title>
        <authorList>
            <person name="Engel S.R."/>
            <person name="Dietrich F.S."/>
            <person name="Fisk D.G."/>
            <person name="Binkley G."/>
            <person name="Balakrishnan R."/>
            <person name="Costanzo M.C."/>
            <person name="Dwight S.S."/>
            <person name="Hitz B.C."/>
            <person name="Karra K."/>
            <person name="Nash R.S."/>
            <person name="Weng S."/>
            <person name="Wong E.D."/>
            <person name="Lloyd P."/>
            <person name="Skrzypek M.S."/>
            <person name="Miyasato S.R."/>
            <person name="Simison M."/>
            <person name="Cherry J.M."/>
        </authorList>
    </citation>
    <scope>GENOME REANNOTATION</scope>
    <source>
        <strain>ATCC 204508 / S288c</strain>
    </source>
</reference>
<reference key="4">
    <citation type="journal article" date="2007" name="Genome Res.">
        <title>Approaching a complete repository of sequence-verified protein-encoding clones for Saccharomyces cerevisiae.</title>
        <authorList>
            <person name="Hu Y."/>
            <person name="Rolfs A."/>
            <person name="Bhullar B."/>
            <person name="Murthy T.V.S."/>
            <person name="Zhu C."/>
            <person name="Berger M.F."/>
            <person name="Camargo A.A."/>
            <person name="Kelley F."/>
            <person name="McCarron S."/>
            <person name="Jepson D."/>
            <person name="Richardson A."/>
            <person name="Raphael J."/>
            <person name="Moreira D."/>
            <person name="Taycher E."/>
            <person name="Zuo D."/>
            <person name="Mohr S."/>
            <person name="Kane M.F."/>
            <person name="Williamson J."/>
            <person name="Simpson A.J.G."/>
            <person name="Bulyk M.L."/>
            <person name="Harlow E."/>
            <person name="Marsischky G."/>
            <person name="Kolodner R.D."/>
            <person name="LaBaer J."/>
        </authorList>
    </citation>
    <scope>NUCLEOTIDE SEQUENCE [GENOMIC DNA]</scope>
    <source>
        <strain>ATCC 204508 / S288c</strain>
    </source>
</reference>
<keyword id="KW-1185">Reference proteome</keyword>
<proteinExistence type="predicted"/>
<organism>
    <name type="scientific">Saccharomyces cerevisiae (strain ATCC 204508 / S288c)</name>
    <name type="common">Baker's yeast</name>
    <dbReference type="NCBI Taxonomy" id="559292"/>
    <lineage>
        <taxon>Eukaryota</taxon>
        <taxon>Fungi</taxon>
        <taxon>Dikarya</taxon>
        <taxon>Ascomycota</taxon>
        <taxon>Saccharomycotina</taxon>
        <taxon>Saccharomycetes</taxon>
        <taxon>Saccharomycetales</taxon>
        <taxon>Saccharomycetaceae</taxon>
        <taxon>Saccharomyces</taxon>
    </lineage>
</organism>
<accession>Q99345</accession>
<accession>A0A1S0T0B6</accession>
<protein>
    <recommendedName>
        <fullName>Uncharacterized protein YOL085C</fullName>
    </recommendedName>
</protein>
<name>YO085_YEAST</name>
<feature type="chain" id="PRO_0000299692" description="Uncharacterized protein YOL085C">
    <location>
        <begin position="1"/>
        <end position="113"/>
    </location>
</feature>
<sequence>MKAKDKYKGRTKNKVKSVDMMYLALRRRKNEFTQLHNHADSVADPRSCRPGDNAGREAVPGGVFCACIFQGLPCAKGRDWRSNKNAGWGCDDDDHDNWCHYLSCRKNLSAFAT</sequence>
<gene>
    <name type="ordered locus">YOL085C</name>
    <name type="ORF">00950</name>
</gene>
<dbReference type="EMBL" id="X83121">
    <property type="protein sequence ID" value="CAA58194.1"/>
    <property type="molecule type" value="Genomic_DNA"/>
</dbReference>
<dbReference type="EMBL" id="Z74827">
    <property type="protein sequence ID" value="CAA99097.1"/>
    <property type="molecule type" value="Genomic_DNA"/>
</dbReference>
<dbReference type="EMBL" id="AY558428">
    <property type="protein sequence ID" value="AAS56754.1"/>
    <property type="molecule type" value="Genomic_DNA"/>
</dbReference>
<dbReference type="EMBL" id="BK006948">
    <property type="protein sequence ID" value="DAA80333.1"/>
    <property type="molecule type" value="Genomic_DNA"/>
</dbReference>
<dbReference type="PIR" id="S57384">
    <property type="entry name" value="S57384"/>
</dbReference>
<dbReference type="RefSeq" id="NP_001335813.1">
    <property type="nucleotide sequence ID" value="NM_001348875.1"/>
</dbReference>
<dbReference type="DIP" id="DIP-4227N"/>
<dbReference type="FunCoup" id="Q99345">
    <property type="interactions" value="36"/>
</dbReference>
<dbReference type="PaxDb" id="4932-YOL085C"/>
<dbReference type="EnsemblFungi" id="YOL085C_mRNA">
    <property type="protein sequence ID" value="YOL085C"/>
    <property type="gene ID" value="YOL085C"/>
</dbReference>
<dbReference type="GeneID" id="854069"/>
<dbReference type="AGR" id="SGD:S000005445"/>
<dbReference type="SGD" id="S000005445">
    <property type="gene designation" value="YOL085C"/>
</dbReference>
<dbReference type="HOGENOM" id="CLU_2135489_0_0_1"/>
<dbReference type="InParanoid" id="Q99345"/>
<dbReference type="OrthoDB" id="4036900at2759"/>
<dbReference type="PRO" id="PR:Q99345"/>
<dbReference type="Proteomes" id="UP000002311">
    <property type="component" value="Chromosome XV"/>
</dbReference>
<dbReference type="RNAct" id="Q99345">
    <property type="molecule type" value="protein"/>
</dbReference>